<sequence>MKVYLHDVNRGLGVFLLAVSFLLPGCSSSGGRRASVPVTVDATAQVVEQARQTWLQEHPNWSFYGRAAIRQGSDGGSVRVEWEQHGRGYRIVLSAPMSRQSWVLSGSSSGPARLEGVGGWVRVGEVAEQVLFEATGWQVPMGLLPDWVRGRNSDSGGGDVQLDAEGRPHRVYQGGWQLRFLDWFPSSVGRPMLPRQIEASRGSARIRLIVDQWDELIP</sequence>
<evidence type="ECO:0000250" key="1"/>
<evidence type="ECO:0000255" key="2"/>
<evidence type="ECO:0000305" key="3"/>
<feature type="signal peptide" evidence="2">
    <location>
        <begin position="1"/>
        <end position="25"/>
    </location>
</feature>
<feature type="chain" id="PRO_0000018321" description="Outer-membrane lipoprotein LolB">
    <location>
        <begin position="26"/>
        <end position="218"/>
    </location>
</feature>
<feature type="lipid moiety-binding region" description="N-palmitoyl cysteine" evidence="2">
    <location>
        <position position="26"/>
    </location>
</feature>
<feature type="lipid moiety-binding region" description="S-diacylglycerol cysteine" evidence="2">
    <location>
        <position position="26"/>
    </location>
</feature>
<protein>
    <recommendedName>
        <fullName>Outer-membrane lipoprotein LolB</fullName>
    </recommendedName>
</protein>
<accession>Q87A20</accession>
<comment type="function">
    <text evidence="1">Plays a critical role in the incorporation of lipoproteins in the outer membrane after they are released by the LolA protein.</text>
</comment>
<comment type="subunit">
    <text evidence="1">Monomer.</text>
</comment>
<comment type="subcellular location">
    <subcellularLocation>
        <location evidence="1">Cell outer membrane</location>
        <topology evidence="1">Lipid-anchor</topology>
    </subcellularLocation>
</comment>
<comment type="similarity">
    <text evidence="3">Belongs to the LolB family.</text>
</comment>
<reference key="1">
    <citation type="journal article" date="2003" name="J. Bacteriol.">
        <title>Comparative analyses of the complete genome sequences of Pierce's disease and citrus variegated chlorosis strains of Xylella fastidiosa.</title>
        <authorList>
            <person name="Van Sluys M.A."/>
            <person name="de Oliveira M.C."/>
            <person name="Monteiro-Vitorello C.B."/>
            <person name="Miyaki C.Y."/>
            <person name="Furlan L.R."/>
            <person name="Camargo L.E.A."/>
            <person name="da Silva A.C.R."/>
            <person name="Moon D.H."/>
            <person name="Takita M.A."/>
            <person name="Lemos E.G.M."/>
            <person name="Machado M.A."/>
            <person name="Ferro M.I.T."/>
            <person name="da Silva F.R."/>
            <person name="Goldman M.H.S."/>
            <person name="Goldman G.H."/>
            <person name="Lemos M.V.F."/>
            <person name="El-Dorry H."/>
            <person name="Tsai S.M."/>
            <person name="Carrer H."/>
            <person name="Carraro D.M."/>
            <person name="de Oliveira R.C."/>
            <person name="Nunes L.R."/>
            <person name="Siqueira W.J."/>
            <person name="Coutinho L.L."/>
            <person name="Kimura E.T."/>
            <person name="Ferro E.S."/>
            <person name="Harakava R."/>
            <person name="Kuramae E.E."/>
            <person name="Marino C.L."/>
            <person name="Giglioti E."/>
            <person name="Abreu I.L."/>
            <person name="Alves L.M.C."/>
            <person name="do Amaral A.M."/>
            <person name="Baia G.S."/>
            <person name="Blanco S.R."/>
            <person name="Brito M.S."/>
            <person name="Cannavan F.S."/>
            <person name="Celestino A.V."/>
            <person name="da Cunha A.F."/>
            <person name="Fenille R.C."/>
            <person name="Ferro J.A."/>
            <person name="Formighieri E.F."/>
            <person name="Kishi L.T."/>
            <person name="Leoni S.G."/>
            <person name="Oliveira A.R."/>
            <person name="Rosa V.E. Jr."/>
            <person name="Sassaki F.T."/>
            <person name="Sena J.A.D."/>
            <person name="de Souza A.A."/>
            <person name="Truffi D."/>
            <person name="Tsukumo F."/>
            <person name="Yanai G.M."/>
            <person name="Zaros L.G."/>
            <person name="Civerolo E.L."/>
            <person name="Simpson A.J.G."/>
            <person name="Almeida N.F. Jr."/>
            <person name="Setubal J.C."/>
            <person name="Kitajima J.P."/>
        </authorList>
    </citation>
    <scope>NUCLEOTIDE SEQUENCE [LARGE SCALE GENOMIC DNA]</scope>
    <source>
        <strain>Temecula1 / ATCC 700964</strain>
    </source>
</reference>
<name>LOLB_XYLFT</name>
<dbReference type="EMBL" id="AE009442">
    <property type="protein sequence ID" value="AAO29843.1"/>
    <property type="molecule type" value="Genomic_DNA"/>
</dbReference>
<dbReference type="RefSeq" id="WP_004087398.1">
    <property type="nucleotide sequence ID" value="NC_004556.1"/>
</dbReference>
<dbReference type="SMR" id="Q87A20"/>
<dbReference type="GeneID" id="93905880"/>
<dbReference type="KEGG" id="xft:PD_2019"/>
<dbReference type="HOGENOM" id="CLU_092816_3_1_6"/>
<dbReference type="Proteomes" id="UP000002516">
    <property type="component" value="Chromosome"/>
</dbReference>
<dbReference type="GO" id="GO:0009279">
    <property type="term" value="C:cell outer membrane"/>
    <property type="evidence" value="ECO:0007669"/>
    <property type="project" value="UniProtKB-SubCell"/>
</dbReference>
<dbReference type="GO" id="GO:0044874">
    <property type="term" value="P:lipoprotein localization to outer membrane"/>
    <property type="evidence" value="ECO:0007669"/>
    <property type="project" value="UniProtKB-UniRule"/>
</dbReference>
<dbReference type="GO" id="GO:0015031">
    <property type="term" value="P:protein transport"/>
    <property type="evidence" value="ECO:0007669"/>
    <property type="project" value="UniProtKB-KW"/>
</dbReference>
<dbReference type="CDD" id="cd16326">
    <property type="entry name" value="LolB"/>
    <property type="match status" value="1"/>
</dbReference>
<dbReference type="Gene3D" id="2.50.20.10">
    <property type="entry name" value="Lipoprotein localisation LolA/LolB/LppX"/>
    <property type="match status" value="1"/>
</dbReference>
<dbReference type="HAMAP" id="MF_00233">
    <property type="entry name" value="LolB"/>
    <property type="match status" value="1"/>
</dbReference>
<dbReference type="InterPro" id="IPR029046">
    <property type="entry name" value="LolA/LolB/LppX"/>
</dbReference>
<dbReference type="InterPro" id="IPR004565">
    <property type="entry name" value="OM_lipoprot_LolB"/>
</dbReference>
<dbReference type="NCBIfam" id="TIGR00548">
    <property type="entry name" value="lolB"/>
    <property type="match status" value="1"/>
</dbReference>
<dbReference type="Pfam" id="PF03550">
    <property type="entry name" value="LolB"/>
    <property type="match status" value="1"/>
</dbReference>
<dbReference type="SUPFAM" id="SSF89392">
    <property type="entry name" value="Prokaryotic lipoproteins and lipoprotein localization factors"/>
    <property type="match status" value="1"/>
</dbReference>
<proteinExistence type="inferred from homology"/>
<organism>
    <name type="scientific">Xylella fastidiosa (strain Temecula1 / ATCC 700964)</name>
    <dbReference type="NCBI Taxonomy" id="183190"/>
    <lineage>
        <taxon>Bacteria</taxon>
        <taxon>Pseudomonadati</taxon>
        <taxon>Pseudomonadota</taxon>
        <taxon>Gammaproteobacteria</taxon>
        <taxon>Lysobacterales</taxon>
        <taxon>Lysobacteraceae</taxon>
        <taxon>Xylella</taxon>
    </lineage>
</organism>
<gene>
    <name type="primary">lolB</name>
    <name type="ordered locus">PD_2019</name>
</gene>
<keyword id="KW-0998">Cell outer membrane</keyword>
<keyword id="KW-0143">Chaperone</keyword>
<keyword id="KW-0449">Lipoprotein</keyword>
<keyword id="KW-0472">Membrane</keyword>
<keyword id="KW-0564">Palmitate</keyword>
<keyword id="KW-0653">Protein transport</keyword>
<keyword id="KW-1185">Reference proteome</keyword>
<keyword id="KW-0732">Signal</keyword>
<keyword id="KW-0813">Transport</keyword>